<comment type="function">
    <text evidence="1">ATP-dependent specificity component of the Clp protease. It directs the protease to specific substrates. Can perform chaperone functions in the absence of ClpP.</text>
</comment>
<comment type="subunit">
    <text evidence="1">Component of the ClpX-ClpP complex. Forms a hexameric ring that, in the presence of ATP, binds to fourteen ClpP subunits assembled into a disk-like structure with a central cavity, resembling the structure of eukaryotic proteasomes.</text>
</comment>
<comment type="similarity">
    <text evidence="1">Belongs to the ClpX chaperone family.</text>
</comment>
<proteinExistence type="inferred from homology"/>
<feature type="chain" id="PRO_1000098006" description="ATP-dependent Clp protease ATP-binding subunit ClpX">
    <location>
        <begin position="1"/>
        <end position="429"/>
    </location>
</feature>
<feature type="domain" description="ClpX-type ZB" evidence="2">
    <location>
        <begin position="6"/>
        <end position="59"/>
    </location>
</feature>
<feature type="binding site" evidence="2">
    <location>
        <position position="18"/>
    </location>
    <ligand>
        <name>Zn(2+)</name>
        <dbReference type="ChEBI" id="CHEBI:29105"/>
    </ligand>
</feature>
<feature type="binding site" evidence="2">
    <location>
        <position position="21"/>
    </location>
    <ligand>
        <name>Zn(2+)</name>
        <dbReference type="ChEBI" id="CHEBI:29105"/>
    </ligand>
</feature>
<feature type="binding site" evidence="2">
    <location>
        <position position="40"/>
    </location>
    <ligand>
        <name>Zn(2+)</name>
        <dbReference type="ChEBI" id="CHEBI:29105"/>
    </ligand>
</feature>
<feature type="binding site" evidence="2">
    <location>
        <position position="43"/>
    </location>
    <ligand>
        <name>Zn(2+)</name>
        <dbReference type="ChEBI" id="CHEBI:29105"/>
    </ligand>
</feature>
<feature type="binding site" evidence="1">
    <location>
        <begin position="122"/>
        <end position="129"/>
    </location>
    <ligand>
        <name>ATP</name>
        <dbReference type="ChEBI" id="CHEBI:30616"/>
    </ligand>
</feature>
<sequence length="429" mass="47412">MSEDRQGRSTDTGKILYCSFCGKSQHEVRKLIAGPSVFICDECVELCNDIIREELEEKAQSARSSLPKPREILEVLDQYVIGQNRAKRTLAVAVYNHYKRIESRQKNDDVELAKSNILLVGPTGSGKTLLAETLARLLNVPFTMADATTLTEAGYVGEDVENIIQKLLQKCDYDVEKAQQGIVYIDEIDKISRKSENPSITRDVSGEGVQQALLKLIEGTVASVPPQGGRKHPQQEFLQVDTKNILFICGGAFAGLDKVIQARSTDVGSIGFGAKVKSSERKQEVGKVLAEVEPEDLIKFGLIPEFVGRLPVVATLEELDEPALIKILTEPKNAITKQFKKLFEMENVELEFRPDALSAIARKALKRKTGARGLRTIVESVLLDTMYDLPSQENVSKVVVDESVIEHKSEPYLIYQTPAAPEQKAAGAE</sequence>
<reference key="1">
    <citation type="journal article" date="2008" name="Genome Biol.">
        <title>The complete genome, comparative and functional analysis of Stenotrophomonas maltophilia reveals an organism heavily shielded by drug resistance determinants.</title>
        <authorList>
            <person name="Crossman L.C."/>
            <person name="Gould V.C."/>
            <person name="Dow J.M."/>
            <person name="Vernikos G.S."/>
            <person name="Okazaki A."/>
            <person name="Sebaihia M."/>
            <person name="Saunders D."/>
            <person name="Arrowsmith C."/>
            <person name="Carver T."/>
            <person name="Peters N."/>
            <person name="Adlem E."/>
            <person name="Kerhornou A."/>
            <person name="Lord A."/>
            <person name="Murphy L."/>
            <person name="Seeger K."/>
            <person name="Squares R."/>
            <person name="Rutter S."/>
            <person name="Quail M.A."/>
            <person name="Rajandream M.A."/>
            <person name="Harris D."/>
            <person name="Churcher C."/>
            <person name="Bentley S.D."/>
            <person name="Parkhill J."/>
            <person name="Thomson N.R."/>
            <person name="Avison M.B."/>
        </authorList>
    </citation>
    <scope>NUCLEOTIDE SEQUENCE [LARGE SCALE GENOMIC DNA]</scope>
    <source>
        <strain>K279a</strain>
    </source>
</reference>
<protein>
    <recommendedName>
        <fullName evidence="1">ATP-dependent Clp protease ATP-binding subunit ClpX</fullName>
    </recommendedName>
</protein>
<dbReference type="EMBL" id="AM743169">
    <property type="protein sequence ID" value="CAQ44554.1"/>
    <property type="molecule type" value="Genomic_DNA"/>
</dbReference>
<dbReference type="RefSeq" id="WP_004154600.1">
    <property type="nucleotide sequence ID" value="NC_010943.1"/>
</dbReference>
<dbReference type="SMR" id="B2FQR3"/>
<dbReference type="EnsemblBacteria" id="CAQ44554">
    <property type="protein sequence ID" value="CAQ44554"/>
    <property type="gene ID" value="Smlt0990"/>
</dbReference>
<dbReference type="GeneID" id="93832021"/>
<dbReference type="KEGG" id="sml:Smlt0990"/>
<dbReference type="eggNOG" id="COG1219">
    <property type="taxonomic scope" value="Bacteria"/>
</dbReference>
<dbReference type="HOGENOM" id="CLU_014218_8_2_6"/>
<dbReference type="Proteomes" id="UP000008840">
    <property type="component" value="Chromosome"/>
</dbReference>
<dbReference type="GO" id="GO:0009376">
    <property type="term" value="C:HslUV protease complex"/>
    <property type="evidence" value="ECO:0007669"/>
    <property type="project" value="TreeGrafter"/>
</dbReference>
<dbReference type="GO" id="GO:0005524">
    <property type="term" value="F:ATP binding"/>
    <property type="evidence" value="ECO:0007669"/>
    <property type="project" value="UniProtKB-UniRule"/>
</dbReference>
<dbReference type="GO" id="GO:0016887">
    <property type="term" value="F:ATP hydrolysis activity"/>
    <property type="evidence" value="ECO:0007669"/>
    <property type="project" value="InterPro"/>
</dbReference>
<dbReference type="GO" id="GO:0140662">
    <property type="term" value="F:ATP-dependent protein folding chaperone"/>
    <property type="evidence" value="ECO:0007669"/>
    <property type="project" value="InterPro"/>
</dbReference>
<dbReference type="GO" id="GO:0046983">
    <property type="term" value="F:protein dimerization activity"/>
    <property type="evidence" value="ECO:0007669"/>
    <property type="project" value="InterPro"/>
</dbReference>
<dbReference type="GO" id="GO:0051082">
    <property type="term" value="F:unfolded protein binding"/>
    <property type="evidence" value="ECO:0007669"/>
    <property type="project" value="UniProtKB-UniRule"/>
</dbReference>
<dbReference type="GO" id="GO:0008270">
    <property type="term" value="F:zinc ion binding"/>
    <property type="evidence" value="ECO:0007669"/>
    <property type="project" value="InterPro"/>
</dbReference>
<dbReference type="GO" id="GO:0051301">
    <property type="term" value="P:cell division"/>
    <property type="evidence" value="ECO:0007669"/>
    <property type="project" value="TreeGrafter"/>
</dbReference>
<dbReference type="GO" id="GO:0051603">
    <property type="term" value="P:proteolysis involved in protein catabolic process"/>
    <property type="evidence" value="ECO:0007669"/>
    <property type="project" value="TreeGrafter"/>
</dbReference>
<dbReference type="CDD" id="cd19497">
    <property type="entry name" value="RecA-like_ClpX"/>
    <property type="match status" value="1"/>
</dbReference>
<dbReference type="FunFam" id="1.10.8.60:FF:000002">
    <property type="entry name" value="ATP-dependent Clp protease ATP-binding subunit ClpX"/>
    <property type="match status" value="1"/>
</dbReference>
<dbReference type="FunFam" id="3.40.50.300:FF:000005">
    <property type="entry name" value="ATP-dependent Clp protease ATP-binding subunit ClpX"/>
    <property type="match status" value="1"/>
</dbReference>
<dbReference type="Gene3D" id="1.10.8.60">
    <property type="match status" value="1"/>
</dbReference>
<dbReference type="Gene3D" id="6.20.220.10">
    <property type="entry name" value="ClpX chaperone, C4-type zinc finger domain"/>
    <property type="match status" value="1"/>
</dbReference>
<dbReference type="Gene3D" id="3.40.50.300">
    <property type="entry name" value="P-loop containing nucleotide triphosphate hydrolases"/>
    <property type="match status" value="1"/>
</dbReference>
<dbReference type="HAMAP" id="MF_00175">
    <property type="entry name" value="ClpX"/>
    <property type="match status" value="1"/>
</dbReference>
<dbReference type="InterPro" id="IPR003593">
    <property type="entry name" value="AAA+_ATPase"/>
</dbReference>
<dbReference type="InterPro" id="IPR050052">
    <property type="entry name" value="ATP-dep_Clp_protease_ClpX"/>
</dbReference>
<dbReference type="InterPro" id="IPR003959">
    <property type="entry name" value="ATPase_AAA_core"/>
</dbReference>
<dbReference type="InterPro" id="IPR019489">
    <property type="entry name" value="Clp_ATPase_C"/>
</dbReference>
<dbReference type="InterPro" id="IPR004487">
    <property type="entry name" value="Clp_protease_ATP-bd_su_ClpX"/>
</dbReference>
<dbReference type="InterPro" id="IPR046425">
    <property type="entry name" value="ClpX_bact"/>
</dbReference>
<dbReference type="InterPro" id="IPR027417">
    <property type="entry name" value="P-loop_NTPase"/>
</dbReference>
<dbReference type="InterPro" id="IPR010603">
    <property type="entry name" value="Znf_CppX_C4"/>
</dbReference>
<dbReference type="InterPro" id="IPR038366">
    <property type="entry name" value="Znf_CppX_C4_sf"/>
</dbReference>
<dbReference type="NCBIfam" id="TIGR00382">
    <property type="entry name" value="clpX"/>
    <property type="match status" value="1"/>
</dbReference>
<dbReference type="NCBIfam" id="NF003745">
    <property type="entry name" value="PRK05342.1"/>
    <property type="match status" value="1"/>
</dbReference>
<dbReference type="PANTHER" id="PTHR48102:SF7">
    <property type="entry name" value="ATP-DEPENDENT CLP PROTEASE ATP-BINDING SUBUNIT CLPX-LIKE, MITOCHONDRIAL"/>
    <property type="match status" value="1"/>
</dbReference>
<dbReference type="PANTHER" id="PTHR48102">
    <property type="entry name" value="ATP-DEPENDENT CLP PROTEASE ATP-BINDING SUBUNIT CLPX-LIKE, MITOCHONDRIAL-RELATED"/>
    <property type="match status" value="1"/>
</dbReference>
<dbReference type="Pfam" id="PF07724">
    <property type="entry name" value="AAA_2"/>
    <property type="match status" value="1"/>
</dbReference>
<dbReference type="Pfam" id="PF10431">
    <property type="entry name" value="ClpB_D2-small"/>
    <property type="match status" value="1"/>
</dbReference>
<dbReference type="Pfam" id="PF06689">
    <property type="entry name" value="zf-C4_ClpX"/>
    <property type="match status" value="1"/>
</dbReference>
<dbReference type="SMART" id="SM00382">
    <property type="entry name" value="AAA"/>
    <property type="match status" value="1"/>
</dbReference>
<dbReference type="SMART" id="SM01086">
    <property type="entry name" value="ClpB_D2-small"/>
    <property type="match status" value="1"/>
</dbReference>
<dbReference type="SMART" id="SM00994">
    <property type="entry name" value="zf-C4_ClpX"/>
    <property type="match status" value="1"/>
</dbReference>
<dbReference type="SUPFAM" id="SSF57716">
    <property type="entry name" value="Glucocorticoid receptor-like (DNA-binding domain)"/>
    <property type="match status" value="1"/>
</dbReference>
<dbReference type="SUPFAM" id="SSF52540">
    <property type="entry name" value="P-loop containing nucleoside triphosphate hydrolases"/>
    <property type="match status" value="1"/>
</dbReference>
<dbReference type="PROSITE" id="PS51902">
    <property type="entry name" value="CLPX_ZB"/>
    <property type="match status" value="1"/>
</dbReference>
<gene>
    <name evidence="1" type="primary">clpX</name>
    <name type="ordered locus">Smlt0990</name>
</gene>
<organism>
    <name type="scientific">Stenotrophomonas maltophilia (strain K279a)</name>
    <dbReference type="NCBI Taxonomy" id="522373"/>
    <lineage>
        <taxon>Bacteria</taxon>
        <taxon>Pseudomonadati</taxon>
        <taxon>Pseudomonadota</taxon>
        <taxon>Gammaproteobacteria</taxon>
        <taxon>Lysobacterales</taxon>
        <taxon>Lysobacteraceae</taxon>
        <taxon>Stenotrophomonas</taxon>
        <taxon>Stenotrophomonas maltophilia group</taxon>
    </lineage>
</organism>
<evidence type="ECO:0000255" key="1">
    <source>
        <dbReference type="HAMAP-Rule" id="MF_00175"/>
    </source>
</evidence>
<evidence type="ECO:0000255" key="2">
    <source>
        <dbReference type="PROSITE-ProRule" id="PRU01250"/>
    </source>
</evidence>
<accession>B2FQR3</accession>
<keyword id="KW-0067">ATP-binding</keyword>
<keyword id="KW-0143">Chaperone</keyword>
<keyword id="KW-0479">Metal-binding</keyword>
<keyword id="KW-0547">Nucleotide-binding</keyword>
<keyword id="KW-1185">Reference proteome</keyword>
<keyword id="KW-0862">Zinc</keyword>
<name>CLPX_STRMK</name>